<comment type="interaction">
    <interactant intactId="EBI-712503">
        <id>O95084</id>
    </interactant>
    <interactant intactId="EBI-2855401">
        <id>Q9BY50</id>
        <label>SEC11C</label>
    </interactant>
    <organismsDiffer>false</organismsDiffer>
    <experiments>3</experiments>
</comment>
<comment type="subcellular location">
    <subcellularLocation>
        <location evidence="6">Secreted</location>
    </subcellularLocation>
</comment>
<comment type="alternative products">
    <event type="alternative splicing"/>
    <isoform>
        <id>O95084-1</id>
        <name>1</name>
        <sequence type="displayed"/>
    </isoform>
    <isoform>
        <id>O95084-2</id>
        <name>2</name>
        <sequence type="described" ref="VSP_056628"/>
    </isoform>
</comment>
<comment type="similarity">
    <text evidence="6">Belongs to the peptidase S1 family.</text>
</comment>
<feature type="signal peptide" evidence="2">
    <location>
        <begin position="1"/>
        <end position="19"/>
    </location>
</feature>
<feature type="chain" id="PRO_0000027847" description="Serine protease 23">
    <location>
        <begin position="20"/>
        <end position="383"/>
    </location>
</feature>
<feature type="active site" description="Charge relay system" evidence="3">
    <location>
        <position position="175"/>
    </location>
</feature>
<feature type="active site" description="Charge relay system" evidence="3">
    <location>
        <position position="240"/>
    </location>
</feature>
<feature type="active site" description="Charge relay system" evidence="3">
    <location>
        <position position="316"/>
    </location>
</feature>
<feature type="modified residue" description="Phosphoserine; by FAM20C" evidence="4">
    <location>
        <position position="109"/>
    </location>
</feature>
<feature type="glycosylation site" description="N-linked (GlcNAc...) asparagine" evidence="2">
    <location>
        <position position="93"/>
    </location>
</feature>
<feature type="glycosylation site" description="N-linked (GlcNAc...) asparagine" evidence="2">
    <location>
        <position position="207"/>
    </location>
</feature>
<feature type="disulfide bond" evidence="1">
    <location>
        <begin position="160"/>
        <end position="176"/>
    </location>
</feature>
<feature type="splice variant" id="VSP_056628" description="In isoform 2." evidence="5">
    <location>
        <begin position="49"/>
        <end position="80"/>
    </location>
</feature>
<sequence length="383" mass="43001">MAGIPGLLFLLFFLLCAVGQVSPYSAPWKPTWPAYRLPVVLPQSTLNLAKPDFGAEAKLEVSSSCGPQCHKGTPLPTYEEAKQYLSYETLYANGSRTETQVGIYILSSSGDGAQHRDSGSSGKSRRKRQIYGYDSRFSIFGKDFLLNYPFSTSVKLSTGCTGTLVAEKHVLTAAHCIHDGKTYVKGTQKLRVGFLKPKFKDGGRGANDSTSAMPEQMKFQWIRVKRTHVPKGWIKGNANDIGMDYDYALLELKKPHKRKFMKIGVSPPAKQLPGGRIHFSGYDNDRPGNLVYRFCDVKDETYDLLYQQCDAQPGASGSGVYVRMWKRQQQKWERKIIGIFSGHQWVDMNGSPQDFNVAVRITPLKYAQICYWIKGNYLDCREG</sequence>
<protein>
    <recommendedName>
        <fullName>Serine protease 23</fullName>
        <ecNumber>3.4.21.-</ecNumber>
    </recommendedName>
    <alternativeName>
        <fullName>Putative secreted protein Zsig13</fullName>
    </alternativeName>
</protein>
<keyword id="KW-0025">Alternative splicing</keyword>
<keyword id="KW-1015">Disulfide bond</keyword>
<keyword id="KW-0325">Glycoprotein</keyword>
<keyword id="KW-0378">Hydrolase</keyword>
<keyword id="KW-0597">Phosphoprotein</keyword>
<keyword id="KW-0645">Protease</keyword>
<keyword id="KW-1267">Proteomics identification</keyword>
<keyword id="KW-1185">Reference proteome</keyword>
<keyword id="KW-0964">Secreted</keyword>
<keyword id="KW-0720">Serine protease</keyword>
<keyword id="KW-0732">Signal</keyword>
<proteinExistence type="evidence at protein level"/>
<evidence type="ECO:0000250" key="1"/>
<evidence type="ECO:0000255" key="2"/>
<evidence type="ECO:0000255" key="3">
    <source>
        <dbReference type="PROSITE-ProRule" id="PRU10078"/>
    </source>
</evidence>
<evidence type="ECO:0000269" key="4">
    <source>
    </source>
</evidence>
<evidence type="ECO:0000303" key="5">
    <source>
    </source>
</evidence>
<evidence type="ECO:0000305" key="6"/>
<gene>
    <name type="primary">PRSS23</name>
    <name type="synonym">ZSIG13</name>
    <name type="ORF">UNQ270/PRO307</name>
</gene>
<dbReference type="EC" id="3.4.21.-"/>
<dbReference type="EMBL" id="AF015287">
    <property type="protein sequence ID" value="AAD01553.1"/>
    <property type="molecule type" value="mRNA"/>
</dbReference>
<dbReference type="EMBL" id="AF193611">
    <property type="protein sequence ID" value="AAF07186.1"/>
    <property type="molecule type" value="mRNA"/>
</dbReference>
<dbReference type="EMBL" id="AL136914">
    <property type="protein sequence ID" value="CAB66848.1"/>
    <property type="molecule type" value="mRNA"/>
</dbReference>
<dbReference type="EMBL" id="AY359033">
    <property type="protein sequence ID" value="AAQ89392.1"/>
    <property type="molecule type" value="mRNA"/>
</dbReference>
<dbReference type="EMBL" id="CR456824">
    <property type="protein sequence ID" value="CAG33105.1"/>
    <property type="molecule type" value="mRNA"/>
</dbReference>
<dbReference type="EMBL" id="AK304301">
    <property type="protein sequence ID" value="BAG65155.1"/>
    <property type="molecule type" value="mRNA"/>
</dbReference>
<dbReference type="EMBL" id="AK315562">
    <property type="protein sequence ID" value="BAG37938.1"/>
    <property type="molecule type" value="mRNA"/>
</dbReference>
<dbReference type="EMBL" id="AP000654">
    <property type="status" value="NOT_ANNOTATED_CDS"/>
    <property type="molecule type" value="Genomic_DNA"/>
</dbReference>
<dbReference type="EMBL" id="AP001528">
    <property type="status" value="NOT_ANNOTATED_CDS"/>
    <property type="molecule type" value="Genomic_DNA"/>
</dbReference>
<dbReference type="EMBL" id="CH471076">
    <property type="protein sequence ID" value="EAW75145.1"/>
    <property type="molecule type" value="Genomic_DNA"/>
</dbReference>
<dbReference type="EMBL" id="BC001278">
    <property type="protein sequence ID" value="AAH01278.1"/>
    <property type="molecule type" value="mRNA"/>
</dbReference>
<dbReference type="CCDS" id="CCDS8278.1">
    <molecule id="O95084-1"/>
</dbReference>
<dbReference type="RefSeq" id="NP_001280107.1">
    <property type="nucleotide sequence ID" value="NM_001293178.1"/>
</dbReference>
<dbReference type="RefSeq" id="NP_001280108.1">
    <molecule id="O95084-1"/>
    <property type="nucleotide sequence ID" value="NM_001293179.2"/>
</dbReference>
<dbReference type="RefSeq" id="NP_001280109.1">
    <molecule id="O95084-1"/>
    <property type="nucleotide sequence ID" value="NM_001293180.2"/>
</dbReference>
<dbReference type="RefSeq" id="NP_009104.3">
    <molecule id="O95084-1"/>
    <property type="nucleotide sequence ID" value="NM_007173.6"/>
</dbReference>
<dbReference type="BioGRID" id="116279">
    <property type="interactions" value="61"/>
</dbReference>
<dbReference type="FunCoup" id="O95084">
    <property type="interactions" value="1197"/>
</dbReference>
<dbReference type="IntAct" id="O95084">
    <property type="interactions" value="51"/>
</dbReference>
<dbReference type="STRING" id="9606.ENSP00000280258"/>
<dbReference type="MEROPS" id="S01.309"/>
<dbReference type="GlyConnect" id="1736">
    <property type="glycosylation" value="2 N-Linked glycans (2 sites)"/>
</dbReference>
<dbReference type="GlyCosmos" id="O95084">
    <property type="glycosylation" value="2 sites, 2 glycans"/>
</dbReference>
<dbReference type="GlyGen" id="O95084">
    <property type="glycosylation" value="4 sites, 6 N-linked glycans (2 sites), 1 O-linked glycan (2 sites)"/>
</dbReference>
<dbReference type="iPTMnet" id="O95084"/>
<dbReference type="PhosphoSitePlus" id="O95084"/>
<dbReference type="BioMuta" id="PRSS23"/>
<dbReference type="jPOST" id="O95084"/>
<dbReference type="MassIVE" id="O95084"/>
<dbReference type="PaxDb" id="9606-ENSP00000280258"/>
<dbReference type="PeptideAtlas" id="O95084"/>
<dbReference type="ProteomicsDB" id="50649">
    <molecule id="O95084-1"/>
</dbReference>
<dbReference type="ProteomicsDB" id="5825"/>
<dbReference type="Pumba" id="O95084"/>
<dbReference type="TopDownProteomics" id="O95084-1">
    <molecule id="O95084-1"/>
</dbReference>
<dbReference type="Antibodypedia" id="31454">
    <property type="antibodies" value="71 antibodies from 20 providers"/>
</dbReference>
<dbReference type="DNASU" id="11098"/>
<dbReference type="Ensembl" id="ENST00000280258.6">
    <molecule id="O95084-1"/>
    <property type="protein sequence ID" value="ENSP00000280258.4"/>
    <property type="gene ID" value="ENSG00000150687.12"/>
</dbReference>
<dbReference type="GeneID" id="11098"/>
<dbReference type="KEGG" id="hsa:11098"/>
<dbReference type="MANE-Select" id="ENST00000280258.6">
    <property type="protein sequence ID" value="ENSP00000280258.4"/>
    <property type="RefSeq nucleotide sequence ID" value="NM_007173.6"/>
    <property type="RefSeq protein sequence ID" value="NP_009104.3"/>
</dbReference>
<dbReference type="UCSC" id="uc001pcb.4">
    <molecule id="O95084-1"/>
    <property type="organism name" value="human"/>
</dbReference>
<dbReference type="AGR" id="HGNC:14370"/>
<dbReference type="CTD" id="11098"/>
<dbReference type="DisGeNET" id="11098"/>
<dbReference type="GeneCards" id="PRSS23"/>
<dbReference type="HGNC" id="HGNC:14370">
    <property type="gene designation" value="PRSS23"/>
</dbReference>
<dbReference type="HPA" id="ENSG00000150687">
    <property type="expression patterns" value="Tissue enhanced (cervix)"/>
</dbReference>
<dbReference type="MalaCards" id="PRSS23"/>
<dbReference type="MIM" id="618376">
    <property type="type" value="gene"/>
</dbReference>
<dbReference type="neXtProt" id="NX_O95084"/>
<dbReference type="OpenTargets" id="ENSG00000150687"/>
<dbReference type="PharmGKB" id="PA134952846"/>
<dbReference type="VEuPathDB" id="HostDB:ENSG00000150687"/>
<dbReference type="eggNOG" id="ENOG502QTW6">
    <property type="taxonomic scope" value="Eukaryota"/>
</dbReference>
<dbReference type="GeneTree" id="ENSGT00390000000155"/>
<dbReference type="HOGENOM" id="CLU_055829_0_0_1"/>
<dbReference type="InParanoid" id="O95084"/>
<dbReference type="OMA" id="WIKGNFM"/>
<dbReference type="OrthoDB" id="10037376at2759"/>
<dbReference type="PAN-GO" id="O95084">
    <property type="GO annotations" value="0 GO annotations based on evolutionary models"/>
</dbReference>
<dbReference type="PhylomeDB" id="O95084"/>
<dbReference type="TreeFam" id="TF329011"/>
<dbReference type="PathwayCommons" id="O95084"/>
<dbReference type="Reactome" id="R-HSA-381426">
    <property type="pathway name" value="Regulation of Insulin-like Growth Factor (IGF) transport and uptake by Insulin-like Growth Factor Binding Proteins (IGFBPs)"/>
</dbReference>
<dbReference type="Reactome" id="R-HSA-8957275">
    <property type="pathway name" value="Post-translational protein phosphorylation"/>
</dbReference>
<dbReference type="SignaLink" id="O95084"/>
<dbReference type="BioGRID-ORCS" id="11098">
    <property type="hits" value="14 hits in 1157 CRISPR screens"/>
</dbReference>
<dbReference type="ChiTaRS" id="PRSS23">
    <property type="organism name" value="human"/>
</dbReference>
<dbReference type="GeneWiki" id="PRSS23"/>
<dbReference type="GenomeRNAi" id="11098"/>
<dbReference type="Pharos" id="O95084">
    <property type="development level" value="Tbio"/>
</dbReference>
<dbReference type="PRO" id="PR:O95084"/>
<dbReference type="Proteomes" id="UP000005640">
    <property type="component" value="Chromosome 11"/>
</dbReference>
<dbReference type="RNAct" id="O95084">
    <property type="molecule type" value="protein"/>
</dbReference>
<dbReference type="Bgee" id="ENSG00000150687">
    <property type="expression patterns" value="Expressed in nasal cavity epithelium and 207 other cell types or tissues"/>
</dbReference>
<dbReference type="ExpressionAtlas" id="O95084">
    <property type="expression patterns" value="baseline and differential"/>
</dbReference>
<dbReference type="GO" id="GO:0005788">
    <property type="term" value="C:endoplasmic reticulum lumen"/>
    <property type="evidence" value="ECO:0000304"/>
    <property type="project" value="Reactome"/>
</dbReference>
<dbReference type="GO" id="GO:0070062">
    <property type="term" value="C:extracellular exosome"/>
    <property type="evidence" value="ECO:0007005"/>
    <property type="project" value="UniProtKB"/>
</dbReference>
<dbReference type="GO" id="GO:0005634">
    <property type="term" value="C:nucleus"/>
    <property type="evidence" value="ECO:0000314"/>
    <property type="project" value="LIFEdb"/>
</dbReference>
<dbReference type="GO" id="GO:0004252">
    <property type="term" value="F:serine-type endopeptidase activity"/>
    <property type="evidence" value="ECO:0007669"/>
    <property type="project" value="InterPro"/>
</dbReference>
<dbReference type="GO" id="GO:0006508">
    <property type="term" value="P:proteolysis"/>
    <property type="evidence" value="ECO:0007669"/>
    <property type="project" value="UniProtKB-KW"/>
</dbReference>
<dbReference type="FunFam" id="2.40.10.10:FF:000040">
    <property type="entry name" value="Serine protease 23"/>
    <property type="match status" value="1"/>
</dbReference>
<dbReference type="FunFam" id="2.40.10.10:FF:000048">
    <property type="entry name" value="serine protease 23"/>
    <property type="match status" value="1"/>
</dbReference>
<dbReference type="Gene3D" id="2.40.10.10">
    <property type="entry name" value="Trypsin-like serine proteases"/>
    <property type="match status" value="2"/>
</dbReference>
<dbReference type="InterPro" id="IPR050966">
    <property type="entry name" value="Glutamyl_endopeptidase"/>
</dbReference>
<dbReference type="InterPro" id="IPR009003">
    <property type="entry name" value="Peptidase_S1_PA"/>
</dbReference>
<dbReference type="InterPro" id="IPR043504">
    <property type="entry name" value="Peptidase_S1_PA_chymotrypsin"/>
</dbReference>
<dbReference type="InterPro" id="IPR001254">
    <property type="entry name" value="Trypsin_dom"/>
</dbReference>
<dbReference type="InterPro" id="IPR018114">
    <property type="entry name" value="TRYPSIN_HIS"/>
</dbReference>
<dbReference type="PANTHER" id="PTHR15462">
    <property type="entry name" value="SERINE PROTEASE"/>
    <property type="match status" value="1"/>
</dbReference>
<dbReference type="PANTHER" id="PTHR15462:SF10">
    <property type="entry name" value="SERINE PROTEASE 23"/>
    <property type="match status" value="1"/>
</dbReference>
<dbReference type="Pfam" id="PF00089">
    <property type="entry name" value="Trypsin"/>
    <property type="match status" value="1"/>
</dbReference>
<dbReference type="SUPFAM" id="SSF50494">
    <property type="entry name" value="Trypsin-like serine proteases"/>
    <property type="match status" value="1"/>
</dbReference>
<dbReference type="PROSITE" id="PS00134">
    <property type="entry name" value="TRYPSIN_HIS"/>
    <property type="match status" value="1"/>
</dbReference>
<organism>
    <name type="scientific">Homo sapiens</name>
    <name type="common">Human</name>
    <dbReference type="NCBI Taxonomy" id="9606"/>
    <lineage>
        <taxon>Eukaryota</taxon>
        <taxon>Metazoa</taxon>
        <taxon>Chordata</taxon>
        <taxon>Craniata</taxon>
        <taxon>Vertebrata</taxon>
        <taxon>Euteleostomi</taxon>
        <taxon>Mammalia</taxon>
        <taxon>Eutheria</taxon>
        <taxon>Euarchontoglires</taxon>
        <taxon>Primates</taxon>
        <taxon>Haplorrhini</taxon>
        <taxon>Catarrhini</taxon>
        <taxon>Hominidae</taxon>
        <taxon>Homo</taxon>
    </lineage>
</organism>
<accession>O95084</accession>
<accession>B2RDJ1</accession>
<accession>B4E2J3</accession>
<accession>Q6IBI0</accession>
<reference key="1">
    <citation type="submission" date="1997-07" db="EMBL/GenBank/DDBJ databases">
        <title>A novel serine protease from human umbilical vein endothelial cells.</title>
        <authorList>
            <person name="Li X."/>
            <person name="Tedder T.F."/>
        </authorList>
    </citation>
    <scope>NUCLEOTIDE SEQUENCE [MRNA] (ISOFORM 1)</scope>
    <source>
        <tissue>Umbilical vein</tissue>
    </source>
</reference>
<reference key="2">
    <citation type="submission" date="1999-10" db="EMBL/GenBank/DDBJ databases">
        <authorList>
            <person name="Sheppard P."/>
            <person name="Blumberg H."/>
            <person name="Jelinek L."/>
            <person name="Foster D."/>
            <person name="O'Hara P."/>
        </authorList>
    </citation>
    <scope>NUCLEOTIDE SEQUENCE [MRNA] (ISOFORM 1)</scope>
</reference>
<reference key="3">
    <citation type="journal article" date="2001" name="Genome Res.">
        <title>Towards a catalog of human genes and proteins: sequencing and analysis of 500 novel complete protein coding human cDNAs.</title>
        <authorList>
            <person name="Wiemann S."/>
            <person name="Weil B."/>
            <person name="Wellenreuther R."/>
            <person name="Gassenhuber J."/>
            <person name="Glassl S."/>
            <person name="Ansorge W."/>
            <person name="Boecher M."/>
            <person name="Bloecker H."/>
            <person name="Bauersachs S."/>
            <person name="Blum H."/>
            <person name="Lauber J."/>
            <person name="Duesterhoeft A."/>
            <person name="Beyer A."/>
            <person name="Koehrer K."/>
            <person name="Strack N."/>
            <person name="Mewes H.-W."/>
            <person name="Ottenwaelder B."/>
            <person name="Obermaier B."/>
            <person name="Tampe J."/>
            <person name="Heubner D."/>
            <person name="Wambutt R."/>
            <person name="Korn B."/>
            <person name="Klein M."/>
            <person name="Poustka A."/>
        </authorList>
    </citation>
    <scope>NUCLEOTIDE SEQUENCE [LARGE SCALE MRNA] (ISOFORM 1)</scope>
    <source>
        <tissue>Uterus</tissue>
    </source>
</reference>
<reference key="4">
    <citation type="journal article" date="2003" name="Genome Res.">
        <title>The secreted protein discovery initiative (SPDI), a large-scale effort to identify novel human secreted and transmembrane proteins: a bioinformatics assessment.</title>
        <authorList>
            <person name="Clark H.F."/>
            <person name="Gurney A.L."/>
            <person name="Abaya E."/>
            <person name="Baker K."/>
            <person name="Baldwin D.T."/>
            <person name="Brush J."/>
            <person name="Chen J."/>
            <person name="Chow B."/>
            <person name="Chui C."/>
            <person name="Crowley C."/>
            <person name="Currell B."/>
            <person name="Deuel B."/>
            <person name="Dowd P."/>
            <person name="Eaton D."/>
            <person name="Foster J.S."/>
            <person name="Grimaldi C."/>
            <person name="Gu Q."/>
            <person name="Hass P.E."/>
            <person name="Heldens S."/>
            <person name="Huang A."/>
            <person name="Kim H.S."/>
            <person name="Klimowski L."/>
            <person name="Jin Y."/>
            <person name="Johnson S."/>
            <person name="Lee J."/>
            <person name="Lewis L."/>
            <person name="Liao D."/>
            <person name="Mark M.R."/>
            <person name="Robbie E."/>
            <person name="Sanchez C."/>
            <person name="Schoenfeld J."/>
            <person name="Seshagiri S."/>
            <person name="Simmons L."/>
            <person name="Singh J."/>
            <person name="Smith V."/>
            <person name="Stinson J."/>
            <person name="Vagts A."/>
            <person name="Vandlen R.L."/>
            <person name="Watanabe C."/>
            <person name="Wieand D."/>
            <person name="Woods K."/>
            <person name="Xie M.-H."/>
            <person name="Yansura D.G."/>
            <person name="Yi S."/>
            <person name="Yu G."/>
            <person name="Yuan J."/>
            <person name="Zhang M."/>
            <person name="Zhang Z."/>
            <person name="Goddard A.D."/>
            <person name="Wood W.I."/>
            <person name="Godowski P.J."/>
            <person name="Gray A.M."/>
        </authorList>
    </citation>
    <scope>NUCLEOTIDE SEQUENCE [LARGE SCALE MRNA] (ISOFORM 1)</scope>
</reference>
<reference key="5">
    <citation type="submission" date="2004-06" db="EMBL/GenBank/DDBJ databases">
        <title>Cloning of human full open reading frames in Gateway(TM) system entry vector (pDONR201).</title>
        <authorList>
            <person name="Ebert L."/>
            <person name="Schick M."/>
            <person name="Neubert P."/>
            <person name="Schatten R."/>
            <person name="Henze S."/>
            <person name="Korn B."/>
        </authorList>
    </citation>
    <scope>NUCLEOTIDE SEQUENCE [LARGE SCALE MRNA] (ISOFORM 1)</scope>
</reference>
<reference key="6">
    <citation type="journal article" date="2004" name="Nat. Genet.">
        <title>Complete sequencing and characterization of 21,243 full-length human cDNAs.</title>
        <authorList>
            <person name="Ota T."/>
            <person name="Suzuki Y."/>
            <person name="Nishikawa T."/>
            <person name="Otsuki T."/>
            <person name="Sugiyama T."/>
            <person name="Irie R."/>
            <person name="Wakamatsu A."/>
            <person name="Hayashi K."/>
            <person name="Sato H."/>
            <person name="Nagai K."/>
            <person name="Kimura K."/>
            <person name="Makita H."/>
            <person name="Sekine M."/>
            <person name="Obayashi M."/>
            <person name="Nishi T."/>
            <person name="Shibahara T."/>
            <person name="Tanaka T."/>
            <person name="Ishii S."/>
            <person name="Yamamoto J."/>
            <person name="Saito K."/>
            <person name="Kawai Y."/>
            <person name="Isono Y."/>
            <person name="Nakamura Y."/>
            <person name="Nagahari K."/>
            <person name="Murakami K."/>
            <person name="Yasuda T."/>
            <person name="Iwayanagi T."/>
            <person name="Wagatsuma M."/>
            <person name="Shiratori A."/>
            <person name="Sudo H."/>
            <person name="Hosoiri T."/>
            <person name="Kaku Y."/>
            <person name="Kodaira H."/>
            <person name="Kondo H."/>
            <person name="Sugawara M."/>
            <person name="Takahashi M."/>
            <person name="Kanda K."/>
            <person name="Yokoi T."/>
            <person name="Furuya T."/>
            <person name="Kikkawa E."/>
            <person name="Omura Y."/>
            <person name="Abe K."/>
            <person name="Kamihara K."/>
            <person name="Katsuta N."/>
            <person name="Sato K."/>
            <person name="Tanikawa M."/>
            <person name="Yamazaki M."/>
            <person name="Ninomiya K."/>
            <person name="Ishibashi T."/>
            <person name="Yamashita H."/>
            <person name="Murakawa K."/>
            <person name="Fujimori K."/>
            <person name="Tanai H."/>
            <person name="Kimata M."/>
            <person name="Watanabe M."/>
            <person name="Hiraoka S."/>
            <person name="Chiba Y."/>
            <person name="Ishida S."/>
            <person name="Ono Y."/>
            <person name="Takiguchi S."/>
            <person name="Watanabe S."/>
            <person name="Yosida M."/>
            <person name="Hotuta T."/>
            <person name="Kusano J."/>
            <person name="Kanehori K."/>
            <person name="Takahashi-Fujii A."/>
            <person name="Hara H."/>
            <person name="Tanase T.-O."/>
            <person name="Nomura Y."/>
            <person name="Togiya S."/>
            <person name="Komai F."/>
            <person name="Hara R."/>
            <person name="Takeuchi K."/>
            <person name="Arita M."/>
            <person name="Imose N."/>
            <person name="Musashino K."/>
            <person name="Yuuki H."/>
            <person name="Oshima A."/>
            <person name="Sasaki N."/>
            <person name="Aotsuka S."/>
            <person name="Yoshikawa Y."/>
            <person name="Matsunawa H."/>
            <person name="Ichihara T."/>
            <person name="Shiohata N."/>
            <person name="Sano S."/>
            <person name="Moriya S."/>
            <person name="Momiyama H."/>
            <person name="Satoh N."/>
            <person name="Takami S."/>
            <person name="Terashima Y."/>
            <person name="Suzuki O."/>
            <person name="Nakagawa S."/>
            <person name="Senoh A."/>
            <person name="Mizoguchi H."/>
            <person name="Goto Y."/>
            <person name="Shimizu F."/>
            <person name="Wakebe H."/>
            <person name="Hishigaki H."/>
            <person name="Watanabe T."/>
            <person name="Sugiyama A."/>
            <person name="Takemoto M."/>
            <person name="Kawakami B."/>
            <person name="Yamazaki M."/>
            <person name="Watanabe K."/>
            <person name="Kumagai A."/>
            <person name="Itakura S."/>
            <person name="Fukuzumi Y."/>
            <person name="Fujimori Y."/>
            <person name="Komiyama M."/>
            <person name="Tashiro H."/>
            <person name="Tanigami A."/>
            <person name="Fujiwara T."/>
            <person name="Ono T."/>
            <person name="Yamada K."/>
            <person name="Fujii Y."/>
            <person name="Ozaki K."/>
            <person name="Hirao M."/>
            <person name="Ohmori Y."/>
            <person name="Kawabata A."/>
            <person name="Hikiji T."/>
            <person name="Kobatake N."/>
            <person name="Inagaki H."/>
            <person name="Ikema Y."/>
            <person name="Okamoto S."/>
            <person name="Okitani R."/>
            <person name="Kawakami T."/>
            <person name="Noguchi S."/>
            <person name="Itoh T."/>
            <person name="Shigeta K."/>
            <person name="Senba T."/>
            <person name="Matsumura K."/>
            <person name="Nakajima Y."/>
            <person name="Mizuno T."/>
            <person name="Morinaga M."/>
            <person name="Sasaki M."/>
            <person name="Togashi T."/>
            <person name="Oyama M."/>
            <person name="Hata H."/>
            <person name="Watanabe M."/>
            <person name="Komatsu T."/>
            <person name="Mizushima-Sugano J."/>
            <person name="Satoh T."/>
            <person name="Shirai Y."/>
            <person name="Takahashi Y."/>
            <person name="Nakagawa K."/>
            <person name="Okumura K."/>
            <person name="Nagase T."/>
            <person name="Nomura N."/>
            <person name="Kikuchi H."/>
            <person name="Masuho Y."/>
            <person name="Yamashita R."/>
            <person name="Nakai K."/>
            <person name="Yada T."/>
            <person name="Nakamura Y."/>
            <person name="Ohara O."/>
            <person name="Isogai T."/>
            <person name="Sugano S."/>
        </authorList>
    </citation>
    <scope>NUCLEOTIDE SEQUENCE [LARGE SCALE MRNA] (ISOFORMS 1 AND 2)</scope>
    <source>
        <tissue>Placenta</tissue>
        <tissue>Trachea</tissue>
    </source>
</reference>
<reference key="7">
    <citation type="journal article" date="2006" name="Nature">
        <title>Human chromosome 11 DNA sequence and analysis including novel gene identification.</title>
        <authorList>
            <person name="Taylor T.D."/>
            <person name="Noguchi H."/>
            <person name="Totoki Y."/>
            <person name="Toyoda A."/>
            <person name="Kuroki Y."/>
            <person name="Dewar K."/>
            <person name="Lloyd C."/>
            <person name="Itoh T."/>
            <person name="Takeda T."/>
            <person name="Kim D.-W."/>
            <person name="She X."/>
            <person name="Barlow K.F."/>
            <person name="Bloom T."/>
            <person name="Bruford E."/>
            <person name="Chang J.L."/>
            <person name="Cuomo C.A."/>
            <person name="Eichler E."/>
            <person name="FitzGerald M.G."/>
            <person name="Jaffe D.B."/>
            <person name="LaButti K."/>
            <person name="Nicol R."/>
            <person name="Park H.-S."/>
            <person name="Seaman C."/>
            <person name="Sougnez C."/>
            <person name="Yang X."/>
            <person name="Zimmer A.R."/>
            <person name="Zody M.C."/>
            <person name="Birren B.W."/>
            <person name="Nusbaum C."/>
            <person name="Fujiyama A."/>
            <person name="Hattori M."/>
            <person name="Rogers J."/>
            <person name="Lander E.S."/>
            <person name="Sakaki Y."/>
        </authorList>
    </citation>
    <scope>NUCLEOTIDE SEQUENCE [LARGE SCALE GENOMIC DNA]</scope>
</reference>
<reference key="8">
    <citation type="submission" date="2005-07" db="EMBL/GenBank/DDBJ databases">
        <authorList>
            <person name="Mural R.J."/>
            <person name="Istrail S."/>
            <person name="Sutton G.G."/>
            <person name="Florea L."/>
            <person name="Halpern A.L."/>
            <person name="Mobarry C.M."/>
            <person name="Lippert R."/>
            <person name="Walenz B."/>
            <person name="Shatkay H."/>
            <person name="Dew I."/>
            <person name="Miller J.R."/>
            <person name="Flanigan M.J."/>
            <person name="Edwards N.J."/>
            <person name="Bolanos R."/>
            <person name="Fasulo D."/>
            <person name="Halldorsson B.V."/>
            <person name="Hannenhalli S."/>
            <person name="Turner R."/>
            <person name="Yooseph S."/>
            <person name="Lu F."/>
            <person name="Nusskern D.R."/>
            <person name="Shue B.C."/>
            <person name="Zheng X.H."/>
            <person name="Zhong F."/>
            <person name="Delcher A.L."/>
            <person name="Huson D.H."/>
            <person name="Kravitz S.A."/>
            <person name="Mouchard L."/>
            <person name="Reinert K."/>
            <person name="Remington K.A."/>
            <person name="Clark A.G."/>
            <person name="Waterman M.S."/>
            <person name="Eichler E.E."/>
            <person name="Adams M.D."/>
            <person name="Hunkapiller M.W."/>
            <person name="Myers E.W."/>
            <person name="Venter J.C."/>
        </authorList>
    </citation>
    <scope>NUCLEOTIDE SEQUENCE [LARGE SCALE GENOMIC DNA]</scope>
</reference>
<reference key="9">
    <citation type="journal article" date="2004" name="Genome Res.">
        <title>The status, quality, and expansion of the NIH full-length cDNA project: the Mammalian Gene Collection (MGC).</title>
        <authorList>
            <consortium name="The MGC Project Team"/>
        </authorList>
    </citation>
    <scope>NUCLEOTIDE SEQUENCE [LARGE SCALE MRNA] (ISOFORM 1)</scope>
    <source>
        <tissue>Cervix</tissue>
    </source>
</reference>
<reference key="10">
    <citation type="journal article" date="2015" name="Cell">
        <title>A single kinase generates the majority of the secreted phosphoproteome.</title>
        <authorList>
            <person name="Tagliabracci V.S."/>
            <person name="Wiley S.E."/>
            <person name="Guo X."/>
            <person name="Kinch L.N."/>
            <person name="Durrant E."/>
            <person name="Wen J."/>
            <person name="Xiao J."/>
            <person name="Cui J."/>
            <person name="Nguyen K.B."/>
            <person name="Engel J.L."/>
            <person name="Coon J.J."/>
            <person name="Grishin N."/>
            <person name="Pinna L.A."/>
            <person name="Pagliarini D.J."/>
            <person name="Dixon J.E."/>
        </authorList>
    </citation>
    <scope>PHOSPHORYLATION AT SER-109</scope>
</reference>
<name>PRS23_HUMAN</name>